<name>KCNA1_RAT</name>
<proteinExistence type="evidence at protein level"/>
<comment type="function">
    <text evidence="2 4 8 10 11 12 16 17 19 20 21 22 23 26 32">Voltage-gated potassium channel that mediates transmembrane potassium transport in excitable membranes, primarily in the brain and the central nervous system, but also in the kidney. Contributes to the regulation of the membrane potential and nerve signaling, and prevents neuronal hyperexcitability (PubMed:12177193, PubMed:17855588, PubMed:22206926). Forms tetrameric potassium-selective channels through which potassium ions pass in accordance with their electrochemical gradient (PubMed:23725331). The channel alternates between opened and closed conformations in response to the voltage difference across the membrane (PubMed:2539643). Can form functional homotetrameric channels and heterotetrameric channels that contain variable proportions of KCNA1, KCNA2, KCNA4, KCNA5, KCNA6, KCNA7, and possibly other family members as well; channel properties depend on the type of alpha subunits that are part of the channel (PubMed:10896669, PubMed:12177193, PubMed:2348860, PubMed:23725331). Channel properties are modulated by cytoplasmic beta subunits that regulate the subcellular location of the alpha subunits and promote rapid inactivation of delayed rectifier potassium channels (PubMed:10896669, PubMed:12114518). In vivo, membranes probably contain a mixture of heteromeric potassium channel complexes, making it difficult to assign currents observed in intact tissues to any particular potassium channel family member. Homotetrameric KCNA1 forms a delayed-rectifier potassium channel that opens in response to membrane depolarization, followed by slow spontaneous channel closure (PubMed:12681381, PubMed:22206926, PubMed:2348860, PubMed:23725331, PubMed:8038169). In contrast, a heterotetrameric channel formed by KCNA1 and KCNA4 shows rapid inactivation (PubMed:2348860). Regulates neuronal excitability in hippocampus, especially in mossy fibers and medial perforant path axons, preventing neuronal hyperexcitability. Response to toxins that are selective for KCNA1, respectively for KCNA2, suggests that heteromeric potassium channels composed of both KCNA1 and KCNA2 play a role in pacemaking and regulate the output of deep cerebellar nuclear neurons (PubMed:12177193, PubMed:23318870). May function as down-stream effector for G protein-coupled receptors and inhibit GABAergic inputs to basolateral amygdala neurons (PubMed:16306173). May contribute to the regulation of neurotransmitter release, such as gamma-aminobutyric acid (GABA) release (PubMed:17869444). Plays a role in regulating the generation of action potentials and preventing hyperexcitability in myelinated axons of the vagus nerve, and thereby contributes to the regulation of heart contraction (By similarity). Required for normal neuromuscular responses (PubMed:22206926). Regulates the frequency of neuronal action potential firing in response to mechanical stimuli, and plays a role in the perception of pain caused by mechanical stimuli, but does not play a role in the perception of pain due to heat stimuli (By similarity). Required for normal responses to auditory stimuli and precise location of sound sources, but not for sound perception (By similarity). The use of toxins that block specific channels suggest that it contributes to the regulation of the axonal release of the neurotransmitter dopamine (By similarity). Required for normal postnatal brain development and normal proliferation of neuronal precursor cells in the brain (By similarity). Plays a role in the reabsorption of Mg(2+) in the distal convoluted tubules in the kidney and in magnesium ion homeostasis, probably via its effect on the membrane potential (By similarity).</text>
</comment>
<comment type="catalytic activity">
    <reaction evidence="19 21 22 23 26">
        <text>K(+)(in) = K(+)(out)</text>
        <dbReference type="Rhea" id="RHEA:29463"/>
        <dbReference type="ChEBI" id="CHEBI:29103"/>
    </reaction>
</comment>
<comment type="activity regulation">
    <text evidence="21 22 23">Inhibited by 4-aminopyridine (4-AP) and by tetraethylammonium (TEA) (PubMed:2539643). Inhibited by kaliotoxin (KTX) (PubMed:23725331).</text>
</comment>
<comment type="subunit">
    <text evidence="1 2 4 7 8 9 10 15 20 25 27">Homotetramer and heterotetramer with other channel-forming alpha subunits, such as KCNA2, KCNA4, KCNA5, KCNA6 and KCNA7 (PubMed:10884227, PubMed:10896669). Channel activity is regulated by interaction with the beta subunits KCNAB1 and KCNAB2 (PubMed:12114518, PubMed:9334400). Identified in a complex with KCNA2 and KCNAB2 (PubMed:10884227, PubMed:10896669, PubMed:11086297, PubMed:23318870). Interacts (via C-terminus) with the PDZ domains of DLG1, DLG2 and DLG4. Interacts with LGI1 within a complex containing LGI1, KCNA4 and KCNAB1. Interacts (via cytoplasmic N-terminal domain) with KCNRG; this inhibits channel activity (By similarity). Interacts with ANK3; this inhibits channel activity (By similarity). Interacts (via N-terminus) with STX1A; this promotes channel inactivation (PubMed:12114518). Interacts (via N-terminus) with the heterodimer formed by GNB1 and GNG2; this promotes channel inactivation (PubMed:12114518). Can interact simultaneously with STX1A and the heterodimer formed by GNB1 and GNG2 (PubMed:12114518). Interacts with ADAM11 (By similarity).</text>
</comment>
<comment type="interaction">
    <interactant intactId="EBI-631463">
        <id>P10499</id>
    </interactant>
    <interactant intactId="EBI-80389">
        <id>P78352</id>
        <label>DLG4</label>
    </interactant>
    <organismsDiffer>true</organismsDiffer>
    <experiments>2</experiments>
</comment>
<comment type="subcellular location">
    <subcellularLocation>
        <location evidence="10 12 16 19 21 22 23 26">Cell membrane</location>
        <topology evidence="31">Multi-pass membrane protein</topology>
    </subcellularLocation>
    <subcellularLocation>
        <location evidence="9 27">Membrane</location>
    </subcellularLocation>
    <subcellularLocation>
        <location evidence="9 11 27">Cell projection</location>
        <location evidence="9 11 27">Axon</location>
    </subcellularLocation>
    <subcellularLocation>
        <location evidence="11 26">Cytoplasmic vesicle</location>
    </subcellularLocation>
    <subcellularLocation>
        <location evidence="11">Perikaryon</location>
    </subcellularLocation>
    <subcellularLocation>
        <location evidence="8 12">Endoplasmic reticulum</location>
    </subcellularLocation>
    <subcellularLocation>
        <location evidence="2">Cell projection</location>
        <location evidence="2">Dendrite</location>
    </subcellularLocation>
    <subcellularLocation>
        <location evidence="2">Cell junction</location>
    </subcellularLocation>
    <subcellularLocation>
        <location evidence="2">Synapse</location>
    </subcellularLocation>
    <subcellularLocation>
        <location evidence="2">Presynapse</location>
    </subcellularLocation>
    <subcellularLocation>
        <location evidence="17">Presynaptic cell membrane</location>
    </subcellularLocation>
    <text evidence="2 8">Homotetrameric KCNA1 is primarily located in the endoplasmic reticulum. Interaction with KCNA2 and KCNAB2 or with KCNA4 and KCNAB2 promotes expression at the cell membrane (PubMed:10896669).</text>
</comment>
<comment type="tissue specificity">
    <text evidence="9 11 14 16 18 27">Detected in hippocampus, in the middle third of the molecular layer of the dentate gyrus and in stratum radiatum and stratum oriens (PubMed:9334400). Detected in the mossy fiber zone in the hippocampus CA3 region, at or near axon terminals (PubMed:9334400). Detected in brain cortex, at basket cell terminals (PubMed:9334400). Detected adjacent to nodes of Ranvier in juxtaparanodal zones in spinal cord nerve fibers, but also in paranodal regions in some myelinated spinal cord axons (PubMed:11086297). Detected in juxtaparanodal regions adjacent to the nodes of Ranvier in myelinated axons in cerebellar white matter (PubMed:9334400). Detected in sensory neurons (PubMed:17855588). Detected in neurons from the medial nucleus of the trapezoid body (PubMed:12177193). Detected in basolateral amygdala (PubMed:16306173). Detected in the paraventricular nucleus of the hypothalamus (PubMed:17869444). Detected in the islet of Langerhans (at protein level) (PubMed:21483673).</text>
</comment>
<comment type="domain">
    <text evidence="7">The cytoplasmic N-terminus is important for tetramerization and for interaction with the beta subunits that promote rapid channel closure.</text>
</comment>
<comment type="domain">
    <text evidence="3">The transmembrane segment S4 functions as a voltage-sensor and is characterized by a series of positively charged amino acids at every third position. Channel opening and closing is effected by a conformation change that affects the position and orientation of the voltage-sensor paddle formed by S3 and S4 within the membrane. A transmembrane electric field that is positive inside would push the positively charged S4 segment outwards, thereby opening the pore, while a field that is negative inside would pull the S4 segment inwards and close the pore. Changes in the position and orientation of S4 are then transmitted to the activation gate formed by the inner helix bundle via the S4-S5 linker region.</text>
</comment>
<comment type="PTM">
    <text evidence="4">Palmitoylated on Cys-243; which may be required for membrane targeting.</text>
</comment>
<comment type="PTM">
    <text evidence="8 26">N-glycosylated.</text>
</comment>
<comment type="PTM">
    <text evidence="2 4 12 26">Phosphorylated on tyrosine residues. Phosphorylation increases in response to NRG1; this inhibits channel activity (By similarity). Phosphorylated by PKA (PubMed:12681381, PubMed:8038169). Phosphorylation at Ser-446 regulates channel activity by down-regulating expression at the cell membrane (By similarity).</text>
</comment>
<comment type="RNA editing">
    <location>
        <position position="400" evidence="13"/>
    </location>
    <text>Partially edited. RNA editing is at an average of 50% in the whole brain.</text>
</comment>
<comment type="miscellaneous">
    <text evidence="19">A missense mutation at Ser-309 is the cause of the autosomal dominant myokymia and seizures (ADMS) phenotype. Homozygous and heterozygous rats are born at the expected Mendelian rate. After 6 weeks, heterozygous rats begin to display muscle twitching, startle responses and spontaneous convulsive seizures; over 80% of the animals are dead after 30 weeks. After 16 weeks, they display lower body weight compared to wild-type. The rats exhibit severe periodic seizures with characteristic alterations in their cortical and hippocampal electroencephalogram, similar to rodent models of temporal lobe epilepsy. Homozygous rats display impaired development starting 14 days after birth, with reduced body weight, tremors, motor incoordination, spontaneous convulsive seizures; none survive past 18 days after birth.</text>
</comment>
<comment type="miscellaneous">
    <text evidence="33">The delay or D-type current observed in hippocampus pyramidal neurons is probably mediated by potassium channels containing KCNA2 plus KCNA1 or other family members. It is activated at about -50 mV, i.e. below the action potential threshold, and is characterized by slow inactivation, extremely slow recovery from inactivation, sensitivity to dendrotoxin (DTX) and to 4-aminopyridine (4-AP).</text>
</comment>
<comment type="similarity">
    <text evidence="31">Belongs to the potassium channel family. A (Shaker) (TC 1.A.1.2) subfamily. Kv1.1/KCNA1 sub-subfamily.</text>
</comment>
<organism>
    <name type="scientific">Rattus norvegicus</name>
    <name type="common">Rat</name>
    <dbReference type="NCBI Taxonomy" id="10116"/>
    <lineage>
        <taxon>Eukaryota</taxon>
        <taxon>Metazoa</taxon>
        <taxon>Chordata</taxon>
        <taxon>Craniata</taxon>
        <taxon>Vertebrata</taxon>
        <taxon>Euteleostomi</taxon>
        <taxon>Mammalia</taxon>
        <taxon>Eutheria</taxon>
        <taxon>Euarchontoglires</taxon>
        <taxon>Glires</taxon>
        <taxon>Rodentia</taxon>
        <taxon>Myomorpha</taxon>
        <taxon>Muroidea</taxon>
        <taxon>Muridae</taxon>
        <taxon>Murinae</taxon>
        <taxon>Rattus</taxon>
    </lineage>
</organism>
<feature type="chain" id="PRO_0000053970" description="Potassium voltage-gated channel subfamily A member 1">
    <location>
        <begin position="1"/>
        <end position="495"/>
    </location>
</feature>
<feature type="topological domain" description="Cytoplasmic" evidence="3">
    <location>
        <begin position="1"/>
        <end position="164"/>
    </location>
</feature>
<feature type="transmembrane region" description="Helical; Name=Segment S1" evidence="3">
    <location>
        <begin position="165"/>
        <end position="186"/>
    </location>
</feature>
<feature type="topological domain" description="Extracellular" evidence="3">
    <location>
        <begin position="187"/>
        <end position="220"/>
    </location>
</feature>
<feature type="transmembrane region" description="Helical; Name=Segment S2" evidence="3">
    <location>
        <begin position="221"/>
        <end position="242"/>
    </location>
</feature>
<feature type="topological domain" description="Cytoplasmic" evidence="3">
    <location>
        <begin position="243"/>
        <end position="253"/>
    </location>
</feature>
<feature type="transmembrane region" description="Helical; Name=Segment S3" evidence="3">
    <location>
        <begin position="254"/>
        <end position="274"/>
    </location>
</feature>
<feature type="topological domain" description="Extracellular" evidence="3">
    <location>
        <begin position="275"/>
        <end position="287"/>
    </location>
</feature>
<feature type="transmembrane region" description="Helical; Voltage-sensor; Name=Segment S4" evidence="3">
    <location>
        <begin position="288"/>
        <end position="308"/>
    </location>
</feature>
<feature type="topological domain" description="Cytoplasmic" evidence="3">
    <location>
        <begin position="309"/>
        <end position="323"/>
    </location>
</feature>
<feature type="transmembrane region" description="Helical; Name=Segment S5" evidence="3">
    <location>
        <begin position="324"/>
        <end position="345"/>
    </location>
</feature>
<feature type="topological domain" description="Extracellular" evidence="3">
    <location>
        <begin position="346"/>
        <end position="359"/>
    </location>
</feature>
<feature type="intramembrane region" description="Helical; Name=Pore helix" evidence="3">
    <location>
        <begin position="360"/>
        <end position="371"/>
    </location>
</feature>
<feature type="intramembrane region" evidence="3">
    <location>
        <begin position="372"/>
        <end position="379"/>
    </location>
</feature>
<feature type="topological domain" description="Extracellular" evidence="3">
    <location>
        <begin position="380"/>
        <end position="386"/>
    </location>
</feature>
<feature type="transmembrane region" description="Helical; Name=Segment S6" evidence="3">
    <location>
        <begin position="387"/>
        <end position="415"/>
    </location>
</feature>
<feature type="topological domain" description="Cytoplasmic" evidence="3">
    <location>
        <begin position="416"/>
        <end position="495"/>
    </location>
</feature>
<feature type="region of interest" description="Tetramerization domain" evidence="31">
    <location>
        <begin position="1"/>
        <end position="128"/>
    </location>
</feature>
<feature type="region of interest" description="Disordered" evidence="6">
    <location>
        <begin position="1"/>
        <end position="30"/>
    </location>
</feature>
<feature type="region of interest" description="S4-S5 linker" evidence="3">
    <location>
        <begin position="310"/>
        <end position="323"/>
    </location>
</feature>
<feature type="short sequence motif" description="Selectivity filter" evidence="3">
    <location>
        <begin position="372"/>
        <end position="377"/>
    </location>
</feature>
<feature type="short sequence motif" description="PDZ-binding" evidence="31">
    <location>
        <begin position="493"/>
        <end position="495"/>
    </location>
</feature>
<feature type="modified residue" description="Phosphoserine" evidence="35">
    <location>
        <position position="23"/>
    </location>
</feature>
<feature type="modified residue" description="Phosphoserine; by PKA" evidence="5">
    <location>
        <position position="322"/>
    </location>
</feature>
<feature type="modified residue" description="Phosphoserine" evidence="35">
    <location>
        <position position="437"/>
    </location>
</feature>
<feature type="modified residue" description="Phosphoserine" evidence="35">
    <location>
        <position position="439"/>
    </location>
</feature>
<feature type="modified residue" description="Phosphoserine; by PKA" evidence="26">
    <location>
        <position position="446"/>
    </location>
</feature>
<feature type="lipid moiety-binding region" description="S-palmitoyl cysteine" evidence="4">
    <location>
        <position position="243"/>
    </location>
</feature>
<feature type="glycosylation site" description="N-linked (GlcNAc...) asparagine" evidence="5">
    <location>
        <position position="207"/>
    </location>
</feature>
<feature type="sequence variant" description="In RNA edited version.">
    <original>I</original>
    <variation>V</variation>
    <location>
        <position position="400"/>
    </location>
</feature>
<feature type="mutagenesis site" description="In ADMS: Dominant negative mutation that abolishes channel activity; leads to myokymia, neuromyotonia, spontaneous epileptic seizures and premature death." evidence="19">
    <original>S</original>
    <variation>T</variation>
    <location>
        <position position="309"/>
    </location>
</feature>
<feature type="mutagenesis site" description="Is not blocked by the scorpion mesomartoxin." evidence="24">
    <original>A</original>
    <variation>R</variation>
    <location>
        <position position="352"/>
    </location>
</feature>
<feature type="mutagenesis site" description="Is not blocked by the scorpion mesomartoxin." evidence="24">
    <original>H</original>
    <variation>Q</variation>
    <location>
        <position position="355"/>
    </location>
</feature>
<feature type="mutagenesis site" description="Is not blocked by the scorpion mesomartoxin." evidence="24">
    <original>S</original>
    <variation>P</variation>
    <location>
        <position position="357"/>
    </location>
</feature>
<feature type="mutagenesis site" description="Is blocked by the scorpion mesomartoxin, with an IC(50)=16.60 nM." evidence="24">
    <original>Y</original>
    <variation>V</variation>
    <location>
        <position position="379"/>
    </location>
</feature>
<feature type="mutagenesis site" description="Is not blocked by the scorpion mesomartoxin." evidence="24">
    <original>V</original>
    <variation>T</variation>
    <location>
        <position position="381"/>
    </location>
</feature>
<feature type="mutagenesis site" description="Abolishes phosphorylation by PKA; when associated with A-446.">
    <original>R</original>
    <variation>C</variation>
    <location>
        <position position="443"/>
    </location>
</feature>
<feature type="mutagenesis site" description="Abolishes phosphorylation by PKA; when associated with C-443.">
    <original>S</original>
    <variation>A</variation>
    <location>
        <position position="446"/>
    </location>
</feature>
<feature type="strand" evidence="36">
    <location>
        <begin position="38"/>
        <end position="43"/>
    </location>
</feature>
<feature type="strand" evidence="36">
    <location>
        <begin position="46"/>
        <end position="51"/>
    </location>
</feature>
<feature type="helix" evidence="36">
    <location>
        <begin position="52"/>
        <end position="56"/>
    </location>
</feature>
<feature type="turn" evidence="36">
    <location>
        <begin position="62"/>
        <end position="64"/>
    </location>
</feature>
<feature type="helix" evidence="36">
    <location>
        <begin position="66"/>
        <end position="69"/>
    </location>
</feature>
<feature type="helix" evidence="36">
    <location>
        <begin position="70"/>
        <end position="72"/>
    </location>
</feature>
<feature type="turn" evidence="36">
    <location>
        <begin position="75"/>
        <end position="78"/>
    </location>
</feature>
<feature type="strand" evidence="36">
    <location>
        <begin position="79"/>
        <end position="82"/>
    </location>
</feature>
<feature type="helix" evidence="36">
    <location>
        <begin position="86"/>
        <end position="97"/>
    </location>
</feature>
<feature type="helix" evidence="36">
    <location>
        <begin position="110"/>
        <end position="119"/>
    </location>
</feature>
<protein>
    <recommendedName>
        <fullName evidence="31">Potassium voltage-gated channel subfamily A member 1</fullName>
    </recommendedName>
    <alternativeName>
        <fullName evidence="29">RBKI</fullName>
    </alternativeName>
    <alternativeName>
        <fullName evidence="28 30">RCK1</fullName>
    </alternativeName>
    <alternativeName>
        <fullName>Voltage-gated potassium channel subunit Kv1.1</fullName>
    </alternativeName>
</protein>
<sequence>MTVMSGENADEASAAPGHPQDGSYPRQADHDDHECCERVVINISGLRFETQLKTLAQFPNTLLGNPKKRMRYFDPLRNEYFFDRNRPSFDAILYYYQSGGRLRRPVNVPLDMFSEEIKFYELGEEAMEKFREDEGFIKEEERPLPEKEYQRQVWLLFEYPESSGPARVIAIVSVMVILISIVIFCLETLPELKDDKDFTGTIHRIDNTTVIYTSNIFTDPFFIVETLCIIWFSFELVVRFFACPSKTDFFKNIMNFIDIVAIIPYFITLGTEIAEQEGNQKGEQATSLAILRVIRLVRVFRIFKLSRHSKGLQILGQTLKASMRELGLLIFFLFIGVILFSSAVYFAEAEEAESHFSSIPDAFWWAVVSMTTVGYGDMYPVTIGGKIVGSLCAIAGVLTIALPVPVIVSNFNYFYHRETEGEEQAQLLHVSSPNLASDSDLSRRSSSTISKSEYMEIEEDMNNSIAHYRQANIRTGNCTATDQNCVNKSKLLTDV</sequence>
<reference key="1">
    <citation type="journal article" date="1988" name="EMBO J.">
        <title>Structure of the voltage-dependent potassium channel is highly conserved from Drosophila to vertebrate central nervous systems.</title>
        <authorList>
            <person name="Baumann A."/>
            <person name="Grupe A."/>
            <person name="Ackermann A."/>
            <person name="Pongs O."/>
        </authorList>
    </citation>
    <scope>NUCLEOTIDE SEQUENCE [MRNA]</scope>
    <source>
        <tissue>Brain</tissue>
    </source>
</reference>
<reference key="2">
    <citation type="journal article" date="1989" name="Science">
        <title>Expression of a cloned rat brain potassium channel in Xenopus oocytes.</title>
        <authorList>
            <person name="Christie M.J."/>
            <person name="Adelman J.P."/>
            <person name="Douglass J."/>
            <person name="North R.A."/>
        </authorList>
    </citation>
    <scope>NUCLEOTIDE SEQUENCE [MRNA]</scope>
    <scope>FUNCTION</scope>
    <scope>TRANSPORTER ACTIVITY</scope>
    <scope>SUBCELLULAR LOCATION</scope>
    <scope>ACTIVITY REGULATION</scope>
    <source>
        <tissue>Brain</tissue>
    </source>
</reference>
<reference key="3">
    <citation type="journal article" date="1990" name="Nature">
        <title>Heteromultimeric channels formed by rat brain potassium-channel proteins.</title>
        <authorList>
            <person name="Ruppersberg J.P."/>
            <person name="Schroeter K.H."/>
            <person name="Sakmann B."/>
            <person name="Stocker M."/>
            <person name="Sewing S."/>
            <person name="Pongs O."/>
        </authorList>
    </citation>
    <scope>FUNCTION</scope>
    <scope>TRANSPORTER ACTIVITY</scope>
    <scope>SUBCELLULAR LOCATION</scope>
    <scope>ACTIVITY REGULATION</scope>
</reference>
<reference key="4">
    <citation type="journal article" date="1994" name="Biochemistry">
        <title>Phosphorylation by protein kinase A of RCK1 K+ channels expressed in Xenopus oocytes.</title>
        <authorList>
            <person name="Ivanina T."/>
            <person name="Perets T."/>
            <person name="Thornhill W.B."/>
            <person name="Levin G."/>
            <person name="Dascal N."/>
            <person name="Lotan I."/>
        </authorList>
    </citation>
    <scope>FUNCTION</scope>
    <scope>TRANSPORTER ACTIVITY</scope>
    <scope>SUBCELLULAR LOCATION</scope>
    <scope>GLYCOSYLATION</scope>
    <scope>PHOSPHORYLATION AT SER-446</scope>
    <scope>MUTAGENESIS OF ARG-443 AND SER-446</scope>
</reference>
<reference key="5">
    <citation type="journal article" date="2003" name="Science">
        <title>Nervous system targets of RNA editing identified by comparative genomics.</title>
        <authorList>
            <person name="Hoopengardner B."/>
            <person name="Bhalla T."/>
            <person name="Staber C."/>
            <person name="Reenan R."/>
        </authorList>
    </citation>
    <scope>RNA EDITING OF POSITION 400</scope>
</reference>
<reference key="6">
    <citation type="journal article" date="1997" name="J. Neurosci.">
        <title>Association and colocalization of the Kvbeta1 and Kvbeta2 beta-subunits with Kv1 alpha-subunits in mammalian brain K+ channel complexes.</title>
        <authorList>
            <person name="Rhodes K.J."/>
            <person name="Strassle B.W."/>
            <person name="Monaghan M.M."/>
            <person name="Bekele-Arcuri Z."/>
            <person name="Matos M.F."/>
            <person name="Trimmer J.S."/>
        </authorList>
    </citation>
    <scope>INTERACTION WITH KCNAB1 AND KCNAB2</scope>
    <scope>SUBCELLULAR LOCATION</scope>
    <scope>TISSUE SPECIFICITY</scope>
</reference>
<reference key="7">
    <citation type="journal article" date="2000" name="J. Biol. Chem.">
        <title>Subunit composition determines Kv1 potassium channel surface expression.</title>
        <authorList>
            <person name="Manganas L.N."/>
            <person name="Trimmer J.S."/>
        </authorList>
    </citation>
    <scope>SUBUNIT</scope>
    <scope>INTERACTION WITH KCNA2 AND KCNA4</scope>
    <scope>SUBCELLULAR LOCATION</scope>
    <scope>GLYCOSYLATION</scope>
</reference>
<reference key="8">
    <citation type="journal article" date="2001" name="J. Comp. Neurol.">
        <title>Subunit composition and novel localization of K+ channels in spinal cord.</title>
        <authorList>
            <person name="Rasband M.N."/>
            <person name="Trimmer J.S."/>
        </authorList>
    </citation>
    <scope>INTERACTION WITH KCNA2 AND KCNA4</scope>
    <scope>SUBUNIT</scope>
    <scope>TISSUE SPECIFICITY</scope>
    <scope>SUBCELLULAR LOCATION</scope>
</reference>
<reference key="9">
    <citation type="journal article" date="2002" name="J. Biol. Chem.">
        <title>Modulation of a brain voltage-gated K+ channel by syntaxin 1A requires the physical interaction of Gbetagamma with the channel.</title>
        <authorList>
            <person name="Michaelevski I."/>
            <person name="Chikvashvili D."/>
            <person name="Tsuk S."/>
            <person name="Fili O."/>
            <person name="Lohse M.J."/>
            <person name="Singer-Lahat D."/>
            <person name="Lotan I."/>
        </authorList>
    </citation>
    <scope>INTERACTION WITH STX1A; GNB1 AND GNG2</scope>
    <scope>FUNCTION</scope>
    <scope>SUBCELLULAR LOCATION</scope>
</reference>
<reference key="10">
    <citation type="journal article" date="2002" name="J. Neurosci.">
        <title>Two heteromeric Kv1 potassium channels differentially regulate action potential firing.</title>
        <authorList>
            <person name="Dodson P.D."/>
            <person name="Barker M.C."/>
            <person name="Forsythe I.D."/>
        </authorList>
    </citation>
    <scope>FUNCTION</scope>
    <scope>SUBCELLULAR LOCATION</scope>
    <scope>TISSUE SPECIFICITY</scope>
</reference>
<reference key="11">
    <citation type="journal article" date="2003" name="J. Physiol. (Lond.)">
        <title>Presynaptic rat Kv1.2 channels suppress synaptic terminal hyperexcitability following action potential invasion.</title>
        <authorList>
            <person name="Dodson P.D."/>
            <person name="Billups B."/>
            <person name="Rusznak Z."/>
            <person name="Szucs G."/>
            <person name="Barker M.C."/>
            <person name="Forsythe I.D."/>
        </authorList>
    </citation>
    <scope>FUNCTION</scope>
    <scope>SUBCELLULAR LOCATION</scope>
    <scope>TISSUE SPECIFICITY</scope>
</reference>
<reference key="12">
    <citation type="journal article" date="2003" name="Neuropharmacology">
        <title>Analysis of phosphorylation-dependent modulation of Kv1.1 potassium channels.</title>
        <authorList>
            <person name="Winklhofer M."/>
            <person name="Matthias K."/>
            <person name="Seifert G."/>
            <person name="Stocker M."/>
            <person name="Sewing S."/>
            <person name="Herget T."/>
            <person name="Steinhaeuser C."/>
            <person name="Saaler-Reinhardt S."/>
        </authorList>
    </citation>
    <scope>FUNCTION</scope>
    <scope>SUBCELLULAR LOCATION</scope>
    <scope>PHOSPHORYLATION</scope>
</reference>
<reference key="13">
    <citation type="journal article" date="1995" name="Nature">
        <title>Clustering of Shaker-type K+ channels by interaction with a family of membrane-associated guanylate kinases.</title>
        <authorList>
            <person name="Kim E."/>
            <person name="Niethammer M."/>
            <person name="Rothschild A."/>
            <person name="Jan Y.N."/>
            <person name="Sheng M."/>
        </authorList>
    </citation>
    <scope>INTERACTION WITH DLG1; DLG2 AND DLG4</scope>
</reference>
<reference key="14">
    <citation type="journal article" date="2006" name="J. Neurophysiol.">
        <title>Mu opioid receptor activation inhibits GABAergic inputs to basolateral amygdala neurons through Kv1.1/1.2 channels.</title>
        <authorList>
            <person name="Finnegan T.F."/>
            <person name="Chen S.R."/>
            <person name="Pan H.L."/>
        </authorList>
    </citation>
    <scope>FUNCTION</scope>
    <scope>TISSUE SPECIFICITY</scope>
</reference>
<reference key="15">
    <citation type="journal article" date="2006" name="Neuron">
        <title>The epilepsy-linked Lgi1 protein assembles into presynaptic Kv1 channels and inhibits inactivation by Kvbeta1.</title>
        <authorList>
            <person name="Schulte U."/>
            <person name="Thumfart J.-O."/>
            <person name="Kloecker N."/>
            <person name="Sailer C.A."/>
            <person name="Bildl W."/>
            <person name="Biniossek M."/>
            <person name="Dehn D."/>
            <person name="Deller T."/>
            <person name="Eble S."/>
            <person name="Abbass K."/>
            <person name="Wangler T."/>
            <person name="Knaus H.-G."/>
            <person name="Fakler B."/>
        </authorList>
    </citation>
    <scope>INTERACTION WITH LGI1; KCNA4 AND KCNAB1</scope>
</reference>
<reference key="16">
    <citation type="journal article" date="2007" name="J. Neurophysiol.">
        <title>Manipulation of the potassium channel Kv1.1 and its effect on neuronal excitability in rat sensory neurons.</title>
        <authorList>
            <person name="Chi X.X."/>
            <person name="Nicol G.D."/>
        </authorList>
    </citation>
    <scope>FUNCTION</scope>
    <scope>SUBCELLULAR LOCATION</scope>
    <scope>TISSUE SPECIFICITY</scope>
</reference>
<reference key="17">
    <citation type="journal article" date="2007" name="Mol. Neurobiol.">
        <title>Ionic channel function in action potential generation: current perspective.</title>
        <authorList>
            <person name="Baranauskas G."/>
        </authorList>
    </citation>
    <scope>REVIEW</scope>
</reference>
<reference key="18">
    <citation type="journal article" date="2007" name="Neuroscience">
        <title>Kv1.1/1.2 channels are downstream effectors of nitric oxide on synaptic GABA release to preautonomic neurons in the paraventricular nucleus.</title>
        <authorList>
            <person name="Yang Q."/>
            <person name="Chen S.R."/>
            <person name="Li D.P."/>
            <person name="Pan H.L."/>
        </authorList>
    </citation>
    <scope>FUNCTION</scope>
    <scope>SUBCELLULAR LOCATION</scope>
    <scope>TISSUE SPECIFICITY</scope>
</reference>
<reference key="19">
    <citation type="journal article" date="2010" name="J. Gen. Physiol.">
        <title>Arrangement of Kv1 alpha subunits dictates sensitivity to tetraethylammonium.</title>
        <authorList>
            <person name="Al-Sabi A."/>
            <person name="Shamotienko O."/>
            <person name="Dhochartaigh S.N."/>
            <person name="Muniyappa N."/>
            <person name="Le Berre M."/>
            <person name="Shaban H."/>
            <person name="Wang J."/>
            <person name="Sack J.T."/>
            <person name="Dolly J.O."/>
        </authorList>
    </citation>
    <scope>FUNCTION</scope>
    <scope>SUBCELLULAR LOCATION</scope>
    <scope>ACTIVITY REGULATION</scope>
</reference>
<reference key="20">
    <citation type="journal article" date="2011" name="PLoS ONE">
        <title>Evidence for presence and functional effects of Kv1.1 channels in beta-cells: general survey and results from mceph/mceph mice.</title>
        <authorList>
            <person name="Ma Z."/>
            <person name="Lavebratt C."/>
            <person name="Almgren M."/>
            <person name="Portwood N."/>
            <person name="Forsberg L.E."/>
            <person name="Branstrom R."/>
            <person name="Berglund E."/>
            <person name="Falkmer S."/>
            <person name="Sundler F."/>
            <person name="Wierup N."/>
            <person name="Bjorklund A."/>
        </authorList>
    </citation>
    <scope>TISSUE SPECIFICITY</scope>
</reference>
<reference key="21">
    <citation type="journal article" date="2012" name="Brain Res.">
        <title>Kcna1-mutant rats dominantly display myokymia, neuromyotonia and spontaneous epileptic seizures.</title>
        <authorList>
            <person name="Ishida S."/>
            <person name="Sakamoto Y."/>
            <person name="Nishio T."/>
            <person name="Baulac S."/>
            <person name="Kuwamura M."/>
            <person name="Ohno Y."/>
            <person name="Takizawa A."/>
            <person name="Kaneko S."/>
            <person name="Serikawa T."/>
            <person name="Mashimo T."/>
        </authorList>
    </citation>
    <scope>FUNCTION</scope>
    <scope>TRANSPORTER ACTIVITY</scope>
    <scope>MUTAGENESIS OF SER-309</scope>
    <scope>SUBCELLULAR LOCATION</scope>
    <scope>MISCELLANEOUS</scope>
</reference>
<reference key="22">
    <citation type="journal article" date="2012" name="Nat. Commun.">
        <title>Quantitative maps of protein phosphorylation sites across 14 different rat organs and tissues.</title>
        <authorList>
            <person name="Lundby A."/>
            <person name="Secher A."/>
            <person name="Lage K."/>
            <person name="Nordsborg N.B."/>
            <person name="Dmytriyev A."/>
            <person name="Lundby C."/>
            <person name="Olsen J.V."/>
        </authorList>
    </citation>
    <scope>PHOSPHORYLATION [LARGE SCALE ANALYSIS] AT SER-23; SER-437 AND SER-439</scope>
    <scope>IDENTIFICATION BY MASS SPECTROMETRY [LARGE SCALE ANALYSIS]</scope>
</reference>
<reference key="23">
    <citation type="journal article" date="2013" name="Biochem. J.">
        <title>Pharmacological characteristics of Kv1.1- and Kv1.2-containing channels are influenced by the stoichiometry and positioning of their alpha subunits.</title>
        <authorList>
            <person name="Al-Sabi A."/>
            <person name="Kaza S.K."/>
            <person name="Dolly J.O."/>
            <person name="Wang J."/>
        </authorList>
    </citation>
    <scope>FUNCTION</scope>
    <scope>TRANSPORTER ACTIVITY</scope>
    <scope>SUBCELLULAR LOCATION</scope>
    <scope>ACTIVITY REGULATION</scope>
</reference>
<reference key="24">
    <citation type="journal article" date="2013" name="J. Physiol. (Lond.)">
        <title>A defined heteromeric KV1 channel stabilizes the intrinsic pacemaking and regulates the output of deep cerebellar nuclear neurons to thalamic targets.</title>
        <authorList>
            <person name="Ovsepian S.V."/>
            <person name="Steuber V."/>
            <person name="Le Berre M."/>
            <person name="O'Hara L."/>
            <person name="O'Leary V.B."/>
            <person name="Dolly J.O."/>
        </authorList>
    </citation>
    <scope>FUNCTION</scope>
    <scope>SUBCELLULAR LOCATION</scope>
    <scope>SUBUNIT</scope>
    <scope>IDENTIFICATION IN A COMPLEX WITH KCNA2 AND KCNAB2</scope>
</reference>
<reference key="25">
    <citation type="journal article" date="2015" name="Biochem. Pharmacol.">
        <title>Mesomartoxin, a new K(v)1.2-selective scorpion toxin interacting with the channel selectivity filter.</title>
        <authorList>
            <person name="Wang X."/>
            <person name="Umetsu Y."/>
            <person name="Gao B."/>
            <person name="Ohki S."/>
            <person name="Zhu S."/>
        </authorList>
    </citation>
    <scope>MUTAGENESIS OF ALA-352; HIS-355; SER-357; TYR-379 AND VAL-381</scope>
</reference>
<reference key="26">
    <citation type="journal article" date="2000" name="Science">
        <title>Structure of the cytoplasmic beta subunit-T1 assembly of voltage-dependent K+ channels.</title>
        <authorList>
            <person name="Gulbis J.M."/>
            <person name="Zhou M."/>
            <person name="Mann S."/>
            <person name="MacKinnon R."/>
        </authorList>
    </citation>
    <scope>X-RAY CRYSTALLOGRAPHY (2.1 ANGSTROMS) OF 29-128</scope>
    <scope>INTERACTION WITH KCNAB2</scope>
    <scope>TETRAMERIZATION</scope>
    <scope>SUBUNIT</scope>
    <scope>DOMAIN</scope>
</reference>
<evidence type="ECO:0000250" key="1"/>
<evidence type="ECO:0000250" key="2">
    <source>
        <dbReference type="UniProtKB" id="P16388"/>
    </source>
</evidence>
<evidence type="ECO:0000250" key="3">
    <source>
        <dbReference type="UniProtKB" id="P63142"/>
    </source>
</evidence>
<evidence type="ECO:0000250" key="4">
    <source>
        <dbReference type="UniProtKB" id="Q09470"/>
    </source>
</evidence>
<evidence type="ECO:0000255" key="5"/>
<evidence type="ECO:0000256" key="6">
    <source>
        <dbReference type="SAM" id="MobiDB-lite"/>
    </source>
</evidence>
<evidence type="ECO:0000269" key="7">
    <source>
    </source>
</evidence>
<evidence type="ECO:0000269" key="8">
    <source>
    </source>
</evidence>
<evidence type="ECO:0000269" key="9">
    <source>
    </source>
</evidence>
<evidence type="ECO:0000269" key="10">
    <source>
    </source>
</evidence>
<evidence type="ECO:0000269" key="11">
    <source>
    </source>
</evidence>
<evidence type="ECO:0000269" key="12">
    <source>
    </source>
</evidence>
<evidence type="ECO:0000269" key="13">
    <source>
    </source>
</evidence>
<evidence type="ECO:0000269" key="14">
    <source>
    </source>
</evidence>
<evidence type="ECO:0000269" key="15">
    <source>
    </source>
</evidence>
<evidence type="ECO:0000269" key="16">
    <source>
    </source>
</evidence>
<evidence type="ECO:0000269" key="17">
    <source>
    </source>
</evidence>
<evidence type="ECO:0000269" key="18">
    <source>
    </source>
</evidence>
<evidence type="ECO:0000269" key="19">
    <source>
    </source>
</evidence>
<evidence type="ECO:0000269" key="20">
    <source>
    </source>
</evidence>
<evidence type="ECO:0000269" key="21">
    <source>
    </source>
</evidence>
<evidence type="ECO:0000269" key="22">
    <source>
    </source>
</evidence>
<evidence type="ECO:0000269" key="23">
    <source>
    </source>
</evidence>
<evidence type="ECO:0000269" key="24">
    <source>
    </source>
</evidence>
<evidence type="ECO:0000269" key="25">
    <source>
    </source>
</evidence>
<evidence type="ECO:0000269" key="26">
    <source>
    </source>
</evidence>
<evidence type="ECO:0000269" key="27">
    <source>
    </source>
</evidence>
<evidence type="ECO:0000303" key="28">
    <source>
    </source>
</evidence>
<evidence type="ECO:0000303" key="29">
    <source>
    </source>
</evidence>
<evidence type="ECO:0000303" key="30">
    <source>
    </source>
</evidence>
<evidence type="ECO:0000305" key="31"/>
<evidence type="ECO:0000305" key="32">
    <source>
    </source>
</evidence>
<evidence type="ECO:0000305" key="33">
    <source>
    </source>
</evidence>
<evidence type="ECO:0000312" key="34">
    <source>
        <dbReference type="RGD" id="2949"/>
    </source>
</evidence>
<evidence type="ECO:0007744" key="35">
    <source>
    </source>
</evidence>
<evidence type="ECO:0007829" key="36">
    <source>
        <dbReference type="PDB" id="1EXB"/>
    </source>
</evidence>
<gene>
    <name evidence="34" type="primary">Kcna1</name>
</gene>
<keyword id="KW-0002">3D-structure</keyword>
<keyword id="KW-0965">Cell junction</keyword>
<keyword id="KW-1003">Cell membrane</keyword>
<keyword id="KW-0966">Cell projection</keyword>
<keyword id="KW-0968">Cytoplasmic vesicle</keyword>
<keyword id="KW-0256">Endoplasmic reticulum</keyword>
<keyword id="KW-0325">Glycoprotein</keyword>
<keyword id="KW-0407">Ion channel</keyword>
<keyword id="KW-0406">Ion transport</keyword>
<keyword id="KW-0449">Lipoprotein</keyword>
<keyword id="KW-0472">Membrane</keyword>
<keyword id="KW-0564">Palmitate</keyword>
<keyword id="KW-0597">Phosphoprotein</keyword>
<keyword id="KW-0630">Potassium</keyword>
<keyword id="KW-0631">Potassium channel</keyword>
<keyword id="KW-0633">Potassium transport</keyword>
<keyword id="KW-1185">Reference proteome</keyword>
<keyword id="KW-0691">RNA editing</keyword>
<keyword id="KW-0770">Synapse</keyword>
<keyword id="KW-0812">Transmembrane</keyword>
<keyword id="KW-1133">Transmembrane helix</keyword>
<keyword id="KW-0813">Transport</keyword>
<keyword id="KW-0851">Voltage-gated channel</keyword>
<accession>P10499</accession>
<dbReference type="EMBL" id="X12589">
    <property type="protein sequence ID" value="CAA31102.1"/>
    <property type="molecule type" value="mRNA"/>
</dbReference>
<dbReference type="EMBL" id="M26161">
    <property type="protein sequence ID" value="AAA41982.1"/>
    <property type="molecule type" value="mRNA"/>
</dbReference>
<dbReference type="PIR" id="B39113">
    <property type="entry name" value="B39113"/>
</dbReference>
<dbReference type="RefSeq" id="NP_775118.1">
    <property type="nucleotide sequence ID" value="NM_173095.3"/>
</dbReference>
<dbReference type="RefSeq" id="XP_038962948.1">
    <property type="nucleotide sequence ID" value="XM_039107020.2"/>
</dbReference>
<dbReference type="PDB" id="1EXB">
    <property type="method" value="X-ray"/>
    <property type="resolution" value="2.10 A"/>
    <property type="chains" value="E=27-129"/>
</dbReference>
<dbReference type="PDBsum" id="1EXB"/>
<dbReference type="SMR" id="P10499"/>
<dbReference type="BioGRID" id="246675">
    <property type="interactions" value="4"/>
</dbReference>
<dbReference type="CORUM" id="P10499"/>
<dbReference type="FunCoup" id="P10499">
    <property type="interactions" value="1265"/>
</dbReference>
<dbReference type="IntAct" id="P10499">
    <property type="interactions" value="3"/>
</dbReference>
<dbReference type="MINT" id="P10499"/>
<dbReference type="STRING" id="10116.ENSRNOP00000026731"/>
<dbReference type="BindingDB" id="P10499"/>
<dbReference type="ChEMBL" id="CHEMBL5190"/>
<dbReference type="GuidetoPHARMACOLOGY" id="538"/>
<dbReference type="GlyCosmos" id="P10499">
    <property type="glycosylation" value="1 site, No reported glycans"/>
</dbReference>
<dbReference type="GlyGen" id="P10499">
    <property type="glycosylation" value="1 site"/>
</dbReference>
<dbReference type="iPTMnet" id="P10499"/>
<dbReference type="PhosphoSitePlus" id="P10499"/>
<dbReference type="PaxDb" id="10116-ENSRNOP00000026731"/>
<dbReference type="ABCD" id="P10499">
    <property type="antibodies" value="2 sequenced antibodies"/>
</dbReference>
<dbReference type="Ensembl" id="ENSRNOT00000101523.1">
    <property type="protein sequence ID" value="ENSRNOP00000081659.1"/>
    <property type="gene ID" value="ENSRNOG00000064052.1"/>
</dbReference>
<dbReference type="GeneID" id="24520"/>
<dbReference type="KEGG" id="rno:24520"/>
<dbReference type="UCSC" id="RGD:2949">
    <property type="organism name" value="rat"/>
</dbReference>
<dbReference type="AGR" id="RGD:2949"/>
<dbReference type="CTD" id="3736"/>
<dbReference type="RGD" id="2949">
    <property type="gene designation" value="Kcna1"/>
</dbReference>
<dbReference type="eggNOG" id="KOG1545">
    <property type="taxonomic scope" value="Eukaryota"/>
</dbReference>
<dbReference type="GeneTree" id="ENSGT00940000158576"/>
<dbReference type="HOGENOM" id="CLU_011722_4_0_1"/>
<dbReference type="InParanoid" id="P10499"/>
<dbReference type="OMA" id="PQEGSYP"/>
<dbReference type="OrthoDB" id="415460at2759"/>
<dbReference type="PhylomeDB" id="P10499"/>
<dbReference type="TreeFam" id="TF313103"/>
<dbReference type="Reactome" id="R-RNO-1296072">
    <property type="pathway name" value="Voltage gated Potassium channels"/>
</dbReference>
<dbReference type="EvolutionaryTrace" id="P10499"/>
<dbReference type="PRO" id="PR:P10499"/>
<dbReference type="Proteomes" id="UP000002494">
    <property type="component" value="Chromosome 4"/>
</dbReference>
<dbReference type="Bgee" id="ENSRNOG00000019750">
    <property type="expression patterns" value="Expressed in cerebellum and 4 other cell types or tissues"/>
</dbReference>
<dbReference type="GO" id="GO:0070161">
    <property type="term" value="C:anchoring junction"/>
    <property type="evidence" value="ECO:0007669"/>
    <property type="project" value="UniProtKB-SubCell"/>
</dbReference>
<dbReference type="GO" id="GO:0016324">
    <property type="term" value="C:apical plasma membrane"/>
    <property type="evidence" value="ECO:0000314"/>
    <property type="project" value="RGD"/>
</dbReference>
<dbReference type="GO" id="GO:0030424">
    <property type="term" value="C:axon"/>
    <property type="evidence" value="ECO:0000266"/>
    <property type="project" value="RGD"/>
</dbReference>
<dbReference type="GO" id="GO:0043194">
    <property type="term" value="C:axon initial segment"/>
    <property type="evidence" value="ECO:0000266"/>
    <property type="project" value="RGD"/>
</dbReference>
<dbReference type="GO" id="GO:0043679">
    <property type="term" value="C:axon terminus"/>
    <property type="evidence" value="ECO:0000250"/>
    <property type="project" value="UniProtKB"/>
</dbReference>
<dbReference type="GO" id="GO:0044305">
    <property type="term" value="C:calyx of Held"/>
    <property type="evidence" value="ECO:0000314"/>
    <property type="project" value="SynGO"/>
</dbReference>
<dbReference type="GO" id="GO:0030054">
    <property type="term" value="C:cell junction"/>
    <property type="evidence" value="ECO:0000250"/>
    <property type="project" value="UniProtKB"/>
</dbReference>
<dbReference type="GO" id="GO:0009986">
    <property type="term" value="C:cell surface"/>
    <property type="evidence" value="ECO:0000314"/>
    <property type="project" value="RGD"/>
</dbReference>
<dbReference type="GO" id="GO:0031410">
    <property type="term" value="C:cytoplasmic vesicle"/>
    <property type="evidence" value="ECO:0007669"/>
    <property type="project" value="UniProtKB-KW"/>
</dbReference>
<dbReference type="GO" id="GO:0005829">
    <property type="term" value="C:cytosol"/>
    <property type="evidence" value="ECO:0000314"/>
    <property type="project" value="UniProtKB"/>
</dbReference>
<dbReference type="GO" id="GO:0030425">
    <property type="term" value="C:dendrite"/>
    <property type="evidence" value="ECO:0000314"/>
    <property type="project" value="BHF-UCL"/>
</dbReference>
<dbReference type="GO" id="GO:0005783">
    <property type="term" value="C:endoplasmic reticulum"/>
    <property type="evidence" value="ECO:0000314"/>
    <property type="project" value="UniProtKB"/>
</dbReference>
<dbReference type="GO" id="GO:0098978">
    <property type="term" value="C:glutamatergic synapse"/>
    <property type="evidence" value="ECO:0000314"/>
    <property type="project" value="SynGO"/>
</dbReference>
<dbReference type="GO" id="GO:0044224">
    <property type="term" value="C:juxtaparanode region of axon"/>
    <property type="evidence" value="ECO:0000314"/>
    <property type="project" value="UniProtKB"/>
</dbReference>
<dbReference type="GO" id="GO:0016020">
    <property type="term" value="C:membrane"/>
    <property type="evidence" value="ECO:0000318"/>
    <property type="project" value="GO_Central"/>
</dbReference>
<dbReference type="GO" id="GO:0043025">
    <property type="term" value="C:neuronal cell body"/>
    <property type="evidence" value="ECO:0000314"/>
    <property type="project" value="UniProtKB"/>
</dbReference>
<dbReference type="GO" id="GO:0033270">
    <property type="term" value="C:paranode region of axon"/>
    <property type="evidence" value="ECO:0000314"/>
    <property type="project" value="UniProtKB"/>
</dbReference>
<dbReference type="GO" id="GO:0043204">
    <property type="term" value="C:perikaryon"/>
    <property type="evidence" value="ECO:0000250"/>
    <property type="project" value="UniProtKB"/>
</dbReference>
<dbReference type="GO" id="GO:0005886">
    <property type="term" value="C:plasma membrane"/>
    <property type="evidence" value="ECO:0000314"/>
    <property type="project" value="UniProtKB"/>
</dbReference>
<dbReference type="GO" id="GO:0045211">
    <property type="term" value="C:postsynaptic membrane"/>
    <property type="evidence" value="ECO:0000314"/>
    <property type="project" value="SynGO"/>
</dbReference>
<dbReference type="GO" id="GO:0034705">
    <property type="term" value="C:potassium channel complex"/>
    <property type="evidence" value="ECO:0000314"/>
    <property type="project" value="UniProtKB"/>
</dbReference>
<dbReference type="GO" id="GO:0042734">
    <property type="term" value="C:presynaptic membrane"/>
    <property type="evidence" value="ECO:0000314"/>
    <property type="project" value="UniProtKB"/>
</dbReference>
<dbReference type="GO" id="GO:0045202">
    <property type="term" value="C:synapse"/>
    <property type="evidence" value="ECO:0000250"/>
    <property type="project" value="UniProtKB"/>
</dbReference>
<dbReference type="GO" id="GO:0008076">
    <property type="term" value="C:voltage-gated potassium channel complex"/>
    <property type="evidence" value="ECO:0000315"/>
    <property type="project" value="UniProtKB"/>
</dbReference>
<dbReference type="GO" id="GO:0005251">
    <property type="term" value="F:delayed rectifier potassium channel activity"/>
    <property type="evidence" value="ECO:0000314"/>
    <property type="project" value="UniProtKB"/>
</dbReference>
<dbReference type="GO" id="GO:0097718">
    <property type="term" value="F:disordered domain specific binding"/>
    <property type="evidence" value="ECO:0000266"/>
    <property type="project" value="RGD"/>
</dbReference>
<dbReference type="GO" id="GO:1905030">
    <property type="term" value="F:voltage-gated monoatomic ion channel activity involved in regulation of postsynaptic membrane potential"/>
    <property type="evidence" value="ECO:0000314"/>
    <property type="project" value="SynGO"/>
</dbReference>
<dbReference type="GO" id="GO:0099508">
    <property type="term" value="F:voltage-gated monoatomic ion channel activity involved in regulation of presynaptic membrane potential"/>
    <property type="evidence" value="ECO:0000314"/>
    <property type="project" value="SynGO"/>
</dbReference>
<dbReference type="GO" id="GO:0005249">
    <property type="term" value="F:voltage-gated potassium channel activity"/>
    <property type="evidence" value="ECO:0000315"/>
    <property type="project" value="UniProtKB"/>
</dbReference>
<dbReference type="GO" id="GO:0001508">
    <property type="term" value="P:action potential"/>
    <property type="evidence" value="ECO:0000318"/>
    <property type="project" value="GO_Central"/>
</dbReference>
<dbReference type="GO" id="GO:0061564">
    <property type="term" value="P:axon development"/>
    <property type="evidence" value="ECO:0000270"/>
    <property type="project" value="RGD"/>
</dbReference>
<dbReference type="GO" id="GO:0007420">
    <property type="term" value="P:brain development"/>
    <property type="evidence" value="ECO:0000266"/>
    <property type="project" value="RGD"/>
</dbReference>
<dbReference type="GO" id="GO:0010644">
    <property type="term" value="P:cell communication by electrical coupling"/>
    <property type="evidence" value="ECO:0000315"/>
    <property type="project" value="UniProtKB"/>
</dbReference>
<dbReference type="GO" id="GO:0071286">
    <property type="term" value="P:cellular response to magnesium ion"/>
    <property type="evidence" value="ECO:0000250"/>
    <property type="project" value="UniProtKB"/>
</dbReference>
<dbReference type="GO" id="GO:0021987">
    <property type="term" value="P:cerebral cortex development"/>
    <property type="evidence" value="ECO:0000270"/>
    <property type="project" value="RGD"/>
</dbReference>
<dbReference type="GO" id="GO:0022038">
    <property type="term" value="P:corpus callosum development"/>
    <property type="evidence" value="ECO:0000270"/>
    <property type="project" value="RGD"/>
</dbReference>
<dbReference type="GO" id="GO:0050966">
    <property type="term" value="P:detection of mechanical stimulus involved in sensory perception of pain"/>
    <property type="evidence" value="ECO:0000250"/>
    <property type="project" value="UniProtKB"/>
</dbReference>
<dbReference type="GO" id="GO:0050976">
    <property type="term" value="P:detection of mechanical stimulus involved in sensory perception of touch"/>
    <property type="evidence" value="ECO:0000250"/>
    <property type="project" value="UniProtKB"/>
</dbReference>
<dbReference type="GO" id="GO:0021766">
    <property type="term" value="P:hippocampus development"/>
    <property type="evidence" value="ECO:0000266"/>
    <property type="project" value="RGD"/>
</dbReference>
<dbReference type="GO" id="GO:0010960">
    <property type="term" value="P:magnesium ion homeostasis"/>
    <property type="evidence" value="ECO:0000250"/>
    <property type="project" value="UniProtKB"/>
</dbReference>
<dbReference type="GO" id="GO:0086011">
    <property type="term" value="P:membrane repolarization during action potential"/>
    <property type="evidence" value="ECO:0000314"/>
    <property type="project" value="UniProtKB"/>
</dbReference>
<dbReference type="GO" id="GO:0007405">
    <property type="term" value="P:neuroblast proliferation"/>
    <property type="evidence" value="ECO:0000266"/>
    <property type="project" value="RGD"/>
</dbReference>
<dbReference type="GO" id="GO:0050905">
    <property type="term" value="P:neuromuscular process"/>
    <property type="evidence" value="ECO:0000250"/>
    <property type="project" value="UniProtKB"/>
</dbReference>
<dbReference type="GO" id="GO:0019228">
    <property type="term" value="P:neuronal action potential"/>
    <property type="evidence" value="ECO:0000315"/>
    <property type="project" value="UniProtKB"/>
</dbReference>
<dbReference type="GO" id="GO:0023041">
    <property type="term" value="P:neuronal signal transduction"/>
    <property type="evidence" value="ECO:0000315"/>
    <property type="project" value="UniProtKB"/>
</dbReference>
<dbReference type="GO" id="GO:0021554">
    <property type="term" value="P:optic nerve development"/>
    <property type="evidence" value="ECO:0000270"/>
    <property type="project" value="RGD"/>
</dbReference>
<dbReference type="GO" id="GO:0071805">
    <property type="term" value="P:potassium ion transmembrane transport"/>
    <property type="evidence" value="ECO:0000314"/>
    <property type="project" value="UniProtKB"/>
</dbReference>
<dbReference type="GO" id="GO:0051260">
    <property type="term" value="P:protein homooligomerization"/>
    <property type="evidence" value="ECO:0007669"/>
    <property type="project" value="InterPro"/>
</dbReference>
<dbReference type="GO" id="GO:0008104">
    <property type="term" value="P:protein localization"/>
    <property type="evidence" value="ECO:0000314"/>
    <property type="project" value="UniProtKB"/>
</dbReference>
<dbReference type="GO" id="GO:0042391">
    <property type="term" value="P:regulation of membrane potential"/>
    <property type="evidence" value="ECO:0000250"/>
    <property type="project" value="UniProtKB"/>
</dbReference>
<dbReference type="GO" id="GO:0006937">
    <property type="term" value="P:regulation of muscle contraction"/>
    <property type="evidence" value="ECO:0000315"/>
    <property type="project" value="UniProtKB"/>
</dbReference>
<dbReference type="GO" id="GO:0001964">
    <property type="term" value="P:startle response"/>
    <property type="evidence" value="ECO:0000315"/>
    <property type="project" value="UniProtKB"/>
</dbReference>
<dbReference type="FunFam" id="1.10.287.70:FF:000002">
    <property type="entry name" value="Potassium voltage-gated channel subfamily a member"/>
    <property type="match status" value="1"/>
</dbReference>
<dbReference type="FunFam" id="3.30.710.10:FF:000007">
    <property type="entry name" value="Potassium voltage-gated channel subfamily A member 2"/>
    <property type="match status" value="1"/>
</dbReference>
<dbReference type="FunFam" id="1.20.120.350:FF:000021">
    <property type="entry name" value="Potassium voltage-gated channel subfamily A member 3"/>
    <property type="match status" value="1"/>
</dbReference>
<dbReference type="Gene3D" id="1.10.287.70">
    <property type="match status" value="1"/>
</dbReference>
<dbReference type="Gene3D" id="3.30.710.10">
    <property type="entry name" value="Potassium Channel Kv1.1, Chain A"/>
    <property type="match status" value="1"/>
</dbReference>
<dbReference type="Gene3D" id="1.20.120.350">
    <property type="entry name" value="Voltage-gated potassium channels. Chain C"/>
    <property type="match status" value="1"/>
</dbReference>
<dbReference type="InterPro" id="IPR000210">
    <property type="entry name" value="BTB/POZ_dom"/>
</dbReference>
<dbReference type="InterPro" id="IPR005821">
    <property type="entry name" value="Ion_trans_dom"/>
</dbReference>
<dbReference type="InterPro" id="IPR003968">
    <property type="entry name" value="K_chnl_volt-dep_Kv"/>
</dbReference>
<dbReference type="InterPro" id="IPR003972">
    <property type="entry name" value="K_chnl_volt-dep_Kv1"/>
</dbReference>
<dbReference type="InterPro" id="IPR004048">
    <property type="entry name" value="K_chnl_volt-dep_Kv1.1"/>
</dbReference>
<dbReference type="InterPro" id="IPR011333">
    <property type="entry name" value="SKP1/BTB/POZ_sf"/>
</dbReference>
<dbReference type="InterPro" id="IPR003131">
    <property type="entry name" value="T1-type_BTB"/>
</dbReference>
<dbReference type="InterPro" id="IPR028325">
    <property type="entry name" value="VG_K_chnl"/>
</dbReference>
<dbReference type="InterPro" id="IPR027359">
    <property type="entry name" value="Volt_channel_dom_sf"/>
</dbReference>
<dbReference type="PANTHER" id="PTHR11537:SF24">
    <property type="entry name" value="POTASSIUM VOLTAGE-GATED CHANNEL SUBFAMILY A MEMBER 1"/>
    <property type="match status" value="1"/>
</dbReference>
<dbReference type="PANTHER" id="PTHR11537">
    <property type="entry name" value="VOLTAGE-GATED POTASSIUM CHANNEL"/>
    <property type="match status" value="1"/>
</dbReference>
<dbReference type="Pfam" id="PF02214">
    <property type="entry name" value="BTB_2"/>
    <property type="match status" value="1"/>
</dbReference>
<dbReference type="Pfam" id="PF00520">
    <property type="entry name" value="Ion_trans"/>
    <property type="match status" value="1"/>
</dbReference>
<dbReference type="PRINTS" id="PR00169">
    <property type="entry name" value="KCHANNEL"/>
</dbReference>
<dbReference type="PRINTS" id="PR01508">
    <property type="entry name" value="KV11CHANNEL"/>
</dbReference>
<dbReference type="PRINTS" id="PR01491">
    <property type="entry name" value="KVCHANNEL"/>
</dbReference>
<dbReference type="PRINTS" id="PR01496">
    <property type="entry name" value="SHAKERCHANEL"/>
</dbReference>
<dbReference type="SMART" id="SM00225">
    <property type="entry name" value="BTB"/>
    <property type="match status" value="1"/>
</dbReference>
<dbReference type="SUPFAM" id="SSF54695">
    <property type="entry name" value="POZ domain"/>
    <property type="match status" value="1"/>
</dbReference>
<dbReference type="SUPFAM" id="SSF81324">
    <property type="entry name" value="Voltage-gated potassium channels"/>
    <property type="match status" value="1"/>
</dbReference>